<dbReference type="EC" id="3.6.4.13" evidence="1"/>
<dbReference type="EMBL" id="AE017220">
    <property type="protein sequence ID" value="AAX67726.1"/>
    <property type="molecule type" value="Genomic_DNA"/>
</dbReference>
<dbReference type="RefSeq" id="WP_000047525.1">
    <property type="nucleotide sequence ID" value="NC_006905.1"/>
</dbReference>
<dbReference type="SMR" id="Q57HT6"/>
<dbReference type="KEGG" id="sec:SCH_3820"/>
<dbReference type="HOGENOM" id="CLU_003041_1_3_6"/>
<dbReference type="Proteomes" id="UP000000538">
    <property type="component" value="Chromosome"/>
</dbReference>
<dbReference type="GO" id="GO:0005829">
    <property type="term" value="C:cytosol"/>
    <property type="evidence" value="ECO:0007669"/>
    <property type="project" value="TreeGrafter"/>
</dbReference>
<dbReference type="GO" id="GO:0005524">
    <property type="term" value="F:ATP binding"/>
    <property type="evidence" value="ECO:0007669"/>
    <property type="project" value="UniProtKB-UniRule"/>
</dbReference>
<dbReference type="GO" id="GO:0016887">
    <property type="term" value="F:ATP hydrolysis activity"/>
    <property type="evidence" value="ECO:0007669"/>
    <property type="project" value="RHEA"/>
</dbReference>
<dbReference type="GO" id="GO:0003723">
    <property type="term" value="F:RNA binding"/>
    <property type="evidence" value="ECO:0007669"/>
    <property type="project" value="UniProtKB-UniRule"/>
</dbReference>
<dbReference type="GO" id="GO:0003724">
    <property type="term" value="F:RNA helicase activity"/>
    <property type="evidence" value="ECO:0007669"/>
    <property type="project" value="UniProtKB-UniRule"/>
</dbReference>
<dbReference type="GO" id="GO:0006401">
    <property type="term" value="P:RNA catabolic process"/>
    <property type="evidence" value="ECO:0007669"/>
    <property type="project" value="UniProtKB-UniRule"/>
</dbReference>
<dbReference type="CDD" id="cd00268">
    <property type="entry name" value="DEADc"/>
    <property type="match status" value="1"/>
</dbReference>
<dbReference type="CDD" id="cd18787">
    <property type="entry name" value="SF2_C_DEAD"/>
    <property type="match status" value="1"/>
</dbReference>
<dbReference type="FunFam" id="3.40.50.300:FF:000008">
    <property type="entry name" value="ATP-dependent RNA helicase RhlB"/>
    <property type="match status" value="1"/>
</dbReference>
<dbReference type="FunFam" id="3.40.50.300:FF:000312">
    <property type="entry name" value="ATP-dependent RNA helicase RhlB"/>
    <property type="match status" value="1"/>
</dbReference>
<dbReference type="Gene3D" id="3.40.50.300">
    <property type="entry name" value="P-loop containing nucleotide triphosphate hydrolases"/>
    <property type="match status" value="2"/>
</dbReference>
<dbReference type="HAMAP" id="MF_00661">
    <property type="entry name" value="DEAD_helicase_RhlB"/>
    <property type="match status" value="1"/>
</dbReference>
<dbReference type="InterPro" id="IPR011545">
    <property type="entry name" value="DEAD/DEAH_box_helicase_dom"/>
</dbReference>
<dbReference type="InterPro" id="IPR050079">
    <property type="entry name" value="DEAD_box_RNA_helicase"/>
</dbReference>
<dbReference type="InterPro" id="IPR014001">
    <property type="entry name" value="Helicase_ATP-bd"/>
</dbReference>
<dbReference type="InterPro" id="IPR001650">
    <property type="entry name" value="Helicase_C-like"/>
</dbReference>
<dbReference type="InterPro" id="IPR027417">
    <property type="entry name" value="P-loop_NTPase"/>
</dbReference>
<dbReference type="InterPro" id="IPR000629">
    <property type="entry name" value="RNA-helicase_DEAD-box_CS"/>
</dbReference>
<dbReference type="InterPro" id="IPR023554">
    <property type="entry name" value="RNA_helicase_ATP-dep_RhlB"/>
</dbReference>
<dbReference type="InterPro" id="IPR014014">
    <property type="entry name" value="RNA_helicase_DEAD_Q_motif"/>
</dbReference>
<dbReference type="NCBIfam" id="NF003419">
    <property type="entry name" value="PRK04837.1"/>
    <property type="match status" value="1"/>
</dbReference>
<dbReference type="PANTHER" id="PTHR47959:SF10">
    <property type="entry name" value="ATP-DEPENDENT RNA HELICASE RHLB"/>
    <property type="match status" value="1"/>
</dbReference>
<dbReference type="PANTHER" id="PTHR47959">
    <property type="entry name" value="ATP-DEPENDENT RNA HELICASE RHLE-RELATED"/>
    <property type="match status" value="1"/>
</dbReference>
<dbReference type="Pfam" id="PF00270">
    <property type="entry name" value="DEAD"/>
    <property type="match status" value="1"/>
</dbReference>
<dbReference type="Pfam" id="PF00271">
    <property type="entry name" value="Helicase_C"/>
    <property type="match status" value="1"/>
</dbReference>
<dbReference type="SMART" id="SM00487">
    <property type="entry name" value="DEXDc"/>
    <property type="match status" value="1"/>
</dbReference>
<dbReference type="SMART" id="SM00490">
    <property type="entry name" value="HELICc"/>
    <property type="match status" value="1"/>
</dbReference>
<dbReference type="SUPFAM" id="SSF52540">
    <property type="entry name" value="P-loop containing nucleoside triphosphate hydrolases"/>
    <property type="match status" value="1"/>
</dbReference>
<dbReference type="PROSITE" id="PS00039">
    <property type="entry name" value="DEAD_ATP_HELICASE"/>
    <property type="match status" value="1"/>
</dbReference>
<dbReference type="PROSITE" id="PS51192">
    <property type="entry name" value="HELICASE_ATP_BIND_1"/>
    <property type="match status" value="1"/>
</dbReference>
<dbReference type="PROSITE" id="PS51194">
    <property type="entry name" value="HELICASE_CTER"/>
    <property type="match status" value="1"/>
</dbReference>
<dbReference type="PROSITE" id="PS51195">
    <property type="entry name" value="Q_MOTIF"/>
    <property type="match status" value="1"/>
</dbReference>
<organism>
    <name type="scientific">Salmonella choleraesuis (strain SC-B67)</name>
    <dbReference type="NCBI Taxonomy" id="321314"/>
    <lineage>
        <taxon>Bacteria</taxon>
        <taxon>Pseudomonadati</taxon>
        <taxon>Pseudomonadota</taxon>
        <taxon>Gammaproteobacteria</taxon>
        <taxon>Enterobacterales</taxon>
        <taxon>Enterobacteriaceae</taxon>
        <taxon>Salmonella</taxon>
    </lineage>
</organism>
<sequence length="421" mass="47093">MSKTHLTEQKFSDFALHPQVVEALEKKGFYNCTPIQALALPLTLAGRDVAGQAQTGTGKTMAFLTSTFHYLLSHPAIDDRKVNQPRALIMAPTRELAVQIHADAEPLAQATGLKLGLAYGGDGYDKQLKVLESGVDILIGTTGRLIDYAKQNHINLGAIQVVVLDEADRMYDLGFIKDIRWLFRRMPPAAQRLNMLFSATLSYRVRELAFEQMNNAEYVEVEPEQKTGHRIKEELFYPSNEEKMRLLQTLIEEEWPDRAIIFANTKHRCEDIWGHLAADGHRVGLLTGDVAQKKRLRILDEFTRGDLDILVATDVAARGLHIPAVTHVFNYDLPDDCEDYVHRIGRTGRAGASGHSISLACEEYALNLPAIESYIGHSIPVSKYNPEALMNDLPKPLRLTRSRPGNGPRRAGAPRNRRRSG</sequence>
<keyword id="KW-0067">ATP-binding</keyword>
<keyword id="KW-0963">Cytoplasm</keyword>
<keyword id="KW-0347">Helicase</keyword>
<keyword id="KW-0378">Hydrolase</keyword>
<keyword id="KW-0547">Nucleotide-binding</keyword>
<keyword id="KW-0694">RNA-binding</keyword>
<reference key="1">
    <citation type="journal article" date="2005" name="Nucleic Acids Res.">
        <title>The genome sequence of Salmonella enterica serovar Choleraesuis, a highly invasive and resistant zoonotic pathogen.</title>
        <authorList>
            <person name="Chiu C.-H."/>
            <person name="Tang P."/>
            <person name="Chu C."/>
            <person name="Hu S."/>
            <person name="Bao Q."/>
            <person name="Yu J."/>
            <person name="Chou Y.-Y."/>
            <person name="Wang H.-S."/>
            <person name="Lee Y.-S."/>
        </authorList>
    </citation>
    <scope>NUCLEOTIDE SEQUENCE [LARGE SCALE GENOMIC DNA]</scope>
    <source>
        <strain>SC-B67</strain>
    </source>
</reference>
<accession>Q57HT6</accession>
<evidence type="ECO:0000255" key="1">
    <source>
        <dbReference type="HAMAP-Rule" id="MF_00661"/>
    </source>
</evidence>
<evidence type="ECO:0000256" key="2">
    <source>
        <dbReference type="SAM" id="MobiDB-lite"/>
    </source>
</evidence>
<proteinExistence type="inferred from homology"/>
<gene>
    <name evidence="1" type="primary">rhlB</name>
    <name type="ordered locus">SCH_3820</name>
</gene>
<name>RHLB_SALCH</name>
<comment type="function">
    <text evidence="1">DEAD-box RNA helicase involved in RNA degradation. Has RNA-dependent ATPase activity and unwinds double-stranded RNA.</text>
</comment>
<comment type="catalytic activity">
    <reaction evidence="1">
        <text>ATP + H2O = ADP + phosphate + H(+)</text>
        <dbReference type="Rhea" id="RHEA:13065"/>
        <dbReference type="ChEBI" id="CHEBI:15377"/>
        <dbReference type="ChEBI" id="CHEBI:15378"/>
        <dbReference type="ChEBI" id="CHEBI:30616"/>
        <dbReference type="ChEBI" id="CHEBI:43474"/>
        <dbReference type="ChEBI" id="CHEBI:456216"/>
        <dbReference type="EC" id="3.6.4.13"/>
    </reaction>
</comment>
<comment type="subunit">
    <text evidence="1">Component of the RNA degradosome, which is a multiprotein complex involved in RNA processing and mRNA degradation.</text>
</comment>
<comment type="subcellular location">
    <subcellularLocation>
        <location evidence="1">Cytoplasm</location>
    </subcellularLocation>
</comment>
<comment type="similarity">
    <text evidence="1">Belongs to the DEAD box helicase family. RhlB subfamily.</text>
</comment>
<protein>
    <recommendedName>
        <fullName evidence="1">ATP-dependent RNA helicase RhlB</fullName>
        <ecNumber evidence="1">3.6.4.13</ecNumber>
    </recommendedName>
</protein>
<feature type="chain" id="PRO_1000082853" description="ATP-dependent RNA helicase RhlB">
    <location>
        <begin position="1"/>
        <end position="421"/>
    </location>
</feature>
<feature type="domain" description="Helicase ATP-binding" evidence="1">
    <location>
        <begin position="40"/>
        <end position="219"/>
    </location>
</feature>
<feature type="domain" description="Helicase C-terminal" evidence="1">
    <location>
        <begin position="245"/>
        <end position="390"/>
    </location>
</feature>
<feature type="region of interest" description="Disordered" evidence="2">
    <location>
        <begin position="396"/>
        <end position="421"/>
    </location>
</feature>
<feature type="short sequence motif" description="Q motif">
    <location>
        <begin position="9"/>
        <end position="37"/>
    </location>
</feature>
<feature type="short sequence motif" description="DEAD box">
    <location>
        <begin position="165"/>
        <end position="168"/>
    </location>
</feature>
<feature type="compositionally biased region" description="Low complexity" evidence="2">
    <location>
        <begin position="402"/>
        <end position="414"/>
    </location>
</feature>
<feature type="binding site" evidence="1">
    <location>
        <begin position="53"/>
        <end position="60"/>
    </location>
    <ligand>
        <name>ATP</name>
        <dbReference type="ChEBI" id="CHEBI:30616"/>
    </ligand>
</feature>